<reference key="1">
    <citation type="journal article" date="2005" name="Gene">
        <title>The first complete chloroplast genome sequence of a lycophyte, Huperzia lucidula (Lycopodiaceae).</title>
        <authorList>
            <person name="Wolf P.G."/>
            <person name="Karol K.G."/>
            <person name="Mandoli D.F."/>
            <person name="Kuehl J.V."/>
            <person name="Arumuganathan K."/>
            <person name="Ellis M.W."/>
            <person name="Mishler B.D."/>
            <person name="Kelch D.G."/>
            <person name="Olmstead R.G."/>
            <person name="Boore J.L."/>
        </authorList>
    </citation>
    <scope>NUCLEOTIDE SEQUENCE [LARGE SCALE GENOMIC DNA]</scope>
</reference>
<gene>
    <name evidence="1" type="primary">atpB</name>
</gene>
<feature type="chain" id="PRO_0000254481" description="ATP synthase subunit beta, chloroplastic">
    <location>
        <begin position="1"/>
        <end position="492"/>
    </location>
</feature>
<feature type="binding site" evidence="1">
    <location>
        <begin position="170"/>
        <end position="177"/>
    </location>
    <ligand>
        <name>ATP</name>
        <dbReference type="ChEBI" id="CHEBI:30616"/>
    </ligand>
</feature>
<accession>Q5SCV8</accession>
<evidence type="ECO:0000255" key="1">
    <source>
        <dbReference type="HAMAP-Rule" id="MF_01347"/>
    </source>
</evidence>
<keyword id="KW-0066">ATP synthesis</keyword>
<keyword id="KW-0067">ATP-binding</keyword>
<keyword id="KW-0139">CF(1)</keyword>
<keyword id="KW-0150">Chloroplast</keyword>
<keyword id="KW-0375">Hydrogen ion transport</keyword>
<keyword id="KW-0406">Ion transport</keyword>
<keyword id="KW-0472">Membrane</keyword>
<keyword id="KW-0547">Nucleotide-binding</keyword>
<keyword id="KW-0934">Plastid</keyword>
<keyword id="KW-0793">Thylakoid</keyword>
<keyword id="KW-1278">Translocase</keyword>
<keyword id="KW-0813">Transport</keyword>
<comment type="function">
    <text evidence="1">Produces ATP from ADP in the presence of a proton gradient across the membrane. The catalytic sites are hosted primarily by the beta subunits.</text>
</comment>
<comment type="catalytic activity">
    <reaction evidence="1">
        <text>ATP + H2O + 4 H(+)(in) = ADP + phosphate + 5 H(+)(out)</text>
        <dbReference type="Rhea" id="RHEA:57720"/>
        <dbReference type="ChEBI" id="CHEBI:15377"/>
        <dbReference type="ChEBI" id="CHEBI:15378"/>
        <dbReference type="ChEBI" id="CHEBI:30616"/>
        <dbReference type="ChEBI" id="CHEBI:43474"/>
        <dbReference type="ChEBI" id="CHEBI:456216"/>
        <dbReference type="EC" id="7.1.2.2"/>
    </reaction>
</comment>
<comment type="subunit">
    <text evidence="1">F-type ATPases have 2 components, CF(1) - the catalytic core - and CF(0) - the membrane proton channel. CF(1) has five subunits: alpha(3), beta(3), gamma(1), delta(1), epsilon(1). CF(0) has four main subunits: a(1), b(1), b'(1) and c(9-12).</text>
</comment>
<comment type="subcellular location">
    <subcellularLocation>
        <location evidence="1">Plastid</location>
        <location evidence="1">Chloroplast thylakoid membrane</location>
        <topology evidence="1">Peripheral membrane protein</topology>
    </subcellularLocation>
</comment>
<comment type="similarity">
    <text evidence="1">Belongs to the ATPase alpha/beta chains family.</text>
</comment>
<organism>
    <name type="scientific">Huperzia lucidula</name>
    <name type="common">Shining clubmoss</name>
    <name type="synonym">Lycopodium lucidulum</name>
    <dbReference type="NCBI Taxonomy" id="37429"/>
    <lineage>
        <taxon>Eukaryota</taxon>
        <taxon>Viridiplantae</taxon>
        <taxon>Streptophyta</taxon>
        <taxon>Embryophyta</taxon>
        <taxon>Tracheophyta</taxon>
        <taxon>Lycopodiopsida</taxon>
        <taxon>Lycopodiales</taxon>
        <taxon>Lycopodiaceae</taxon>
        <taxon>Huperzioideae</taxon>
        <taxon>Huperzia</taxon>
    </lineage>
</organism>
<geneLocation type="chloroplast"/>
<sequence>MEINPFALGVSTLVEKNVGYITQIIGPVLDVAFPPGKMPNIYNSSIIKGKNPAGQEMNVTCEVQQLLGNNKVRAVAMSATDGLTREMKVVDTGAPLSVPVGEATLGRIFNVLGEPVDNLGSVDAGTTSPIHRSAPAFAQSDTKLSIFETGIKVVDLLAPYRRGGKIGLFGGAGVGKTVLIMELINNIAKAHGGVSVFGGVGERTREGNDLYMEMKESKVINEQNISESKVALVYGQMNEPPGARMRVGLTALTMAEYFRDVNKQDVLLFIDNILRFVQAGSEVSALLGRMPSAVGYQPTLGTEMGSLQERITSTKEGSITSIQAVYVPADDLTDPAPATTFAHLDATTVLSRGLAAKGIYPAVDPSDSTPTMLQPWIVGEQHYETAQEVKQTLQRYKELQDIIAILGLDESSEEDRLTVARARKIERFLSQPFFVAEVFTGSPGKYVTLVETIKGFQMILSGELDNLPEQAFYLVGDINEATAKAATSQVEN</sequence>
<name>ATPB_HUPLU</name>
<dbReference type="EC" id="7.1.2.2" evidence="1"/>
<dbReference type="EMBL" id="AY660566">
    <property type="protein sequence ID" value="AAT80718.1"/>
    <property type="molecule type" value="Genomic_DNA"/>
</dbReference>
<dbReference type="RefSeq" id="YP_209522.1">
    <property type="nucleotide sequence ID" value="NC_006861.1"/>
</dbReference>
<dbReference type="SMR" id="Q5SCV8"/>
<dbReference type="GeneID" id="3283761"/>
<dbReference type="GO" id="GO:0009535">
    <property type="term" value="C:chloroplast thylakoid membrane"/>
    <property type="evidence" value="ECO:0007669"/>
    <property type="project" value="UniProtKB-SubCell"/>
</dbReference>
<dbReference type="GO" id="GO:0005739">
    <property type="term" value="C:mitochondrion"/>
    <property type="evidence" value="ECO:0007669"/>
    <property type="project" value="GOC"/>
</dbReference>
<dbReference type="GO" id="GO:0045259">
    <property type="term" value="C:proton-transporting ATP synthase complex"/>
    <property type="evidence" value="ECO:0007669"/>
    <property type="project" value="UniProtKB-KW"/>
</dbReference>
<dbReference type="GO" id="GO:0005524">
    <property type="term" value="F:ATP binding"/>
    <property type="evidence" value="ECO:0007669"/>
    <property type="project" value="UniProtKB-UniRule"/>
</dbReference>
<dbReference type="GO" id="GO:0016887">
    <property type="term" value="F:ATP hydrolysis activity"/>
    <property type="evidence" value="ECO:0007669"/>
    <property type="project" value="InterPro"/>
</dbReference>
<dbReference type="GO" id="GO:0046933">
    <property type="term" value="F:proton-transporting ATP synthase activity, rotational mechanism"/>
    <property type="evidence" value="ECO:0007669"/>
    <property type="project" value="UniProtKB-UniRule"/>
</dbReference>
<dbReference type="GO" id="GO:0042776">
    <property type="term" value="P:proton motive force-driven mitochondrial ATP synthesis"/>
    <property type="evidence" value="ECO:0007669"/>
    <property type="project" value="TreeGrafter"/>
</dbReference>
<dbReference type="CDD" id="cd18110">
    <property type="entry name" value="ATP-synt_F1_beta_C"/>
    <property type="match status" value="1"/>
</dbReference>
<dbReference type="CDD" id="cd18115">
    <property type="entry name" value="ATP-synt_F1_beta_N"/>
    <property type="match status" value="1"/>
</dbReference>
<dbReference type="CDD" id="cd01133">
    <property type="entry name" value="F1-ATPase_beta_CD"/>
    <property type="match status" value="1"/>
</dbReference>
<dbReference type="FunFam" id="1.10.1140.10:FF:000001">
    <property type="entry name" value="ATP synthase subunit beta"/>
    <property type="match status" value="1"/>
</dbReference>
<dbReference type="FunFam" id="3.40.50.300:FF:000004">
    <property type="entry name" value="ATP synthase subunit beta"/>
    <property type="match status" value="1"/>
</dbReference>
<dbReference type="FunFam" id="2.40.10.170:FF:000002">
    <property type="entry name" value="ATP synthase subunit beta, chloroplastic"/>
    <property type="match status" value="1"/>
</dbReference>
<dbReference type="Gene3D" id="2.40.10.170">
    <property type="match status" value="1"/>
</dbReference>
<dbReference type="Gene3D" id="1.10.1140.10">
    <property type="entry name" value="Bovine Mitochondrial F1-atpase, Atp Synthase Beta Chain, Chain D, domain 3"/>
    <property type="match status" value="1"/>
</dbReference>
<dbReference type="Gene3D" id="3.40.50.300">
    <property type="entry name" value="P-loop containing nucleotide triphosphate hydrolases"/>
    <property type="match status" value="1"/>
</dbReference>
<dbReference type="HAMAP" id="MF_01347">
    <property type="entry name" value="ATP_synth_beta_bact"/>
    <property type="match status" value="1"/>
</dbReference>
<dbReference type="InterPro" id="IPR003593">
    <property type="entry name" value="AAA+_ATPase"/>
</dbReference>
<dbReference type="InterPro" id="IPR055190">
    <property type="entry name" value="ATP-synt_VA_C"/>
</dbReference>
<dbReference type="InterPro" id="IPR005722">
    <property type="entry name" value="ATP_synth_F1_bsu"/>
</dbReference>
<dbReference type="InterPro" id="IPR050053">
    <property type="entry name" value="ATPase_alpha/beta_chains"/>
</dbReference>
<dbReference type="InterPro" id="IPR004100">
    <property type="entry name" value="ATPase_F1/V1/A1_a/bsu_N"/>
</dbReference>
<dbReference type="InterPro" id="IPR036121">
    <property type="entry name" value="ATPase_F1/V1/A1_a/bsu_N_sf"/>
</dbReference>
<dbReference type="InterPro" id="IPR000194">
    <property type="entry name" value="ATPase_F1/V1/A1_a/bsu_nucl-bd"/>
</dbReference>
<dbReference type="InterPro" id="IPR024034">
    <property type="entry name" value="ATPase_F1/V1_b/a_C"/>
</dbReference>
<dbReference type="InterPro" id="IPR027417">
    <property type="entry name" value="P-loop_NTPase"/>
</dbReference>
<dbReference type="NCBIfam" id="TIGR01039">
    <property type="entry name" value="atpD"/>
    <property type="match status" value="1"/>
</dbReference>
<dbReference type="PANTHER" id="PTHR15184">
    <property type="entry name" value="ATP SYNTHASE"/>
    <property type="match status" value="1"/>
</dbReference>
<dbReference type="PANTHER" id="PTHR15184:SF71">
    <property type="entry name" value="ATP SYNTHASE SUBUNIT BETA, MITOCHONDRIAL"/>
    <property type="match status" value="1"/>
</dbReference>
<dbReference type="Pfam" id="PF00006">
    <property type="entry name" value="ATP-synt_ab"/>
    <property type="match status" value="1"/>
</dbReference>
<dbReference type="Pfam" id="PF02874">
    <property type="entry name" value="ATP-synt_ab_N"/>
    <property type="match status" value="1"/>
</dbReference>
<dbReference type="Pfam" id="PF22919">
    <property type="entry name" value="ATP-synt_VA_C"/>
    <property type="match status" value="1"/>
</dbReference>
<dbReference type="SMART" id="SM00382">
    <property type="entry name" value="AAA"/>
    <property type="match status" value="1"/>
</dbReference>
<dbReference type="SUPFAM" id="SSF47917">
    <property type="entry name" value="C-terminal domain of alpha and beta subunits of F1 ATP synthase"/>
    <property type="match status" value="1"/>
</dbReference>
<dbReference type="SUPFAM" id="SSF50615">
    <property type="entry name" value="N-terminal domain of alpha and beta subunits of F1 ATP synthase"/>
    <property type="match status" value="1"/>
</dbReference>
<dbReference type="SUPFAM" id="SSF52540">
    <property type="entry name" value="P-loop containing nucleoside triphosphate hydrolases"/>
    <property type="match status" value="1"/>
</dbReference>
<protein>
    <recommendedName>
        <fullName evidence="1">ATP synthase subunit beta, chloroplastic</fullName>
        <ecNumber evidence="1">7.1.2.2</ecNumber>
    </recommendedName>
    <alternativeName>
        <fullName evidence="1">ATP synthase F1 sector subunit beta</fullName>
    </alternativeName>
    <alternativeName>
        <fullName evidence="1">F-ATPase subunit beta</fullName>
    </alternativeName>
</protein>
<proteinExistence type="inferred from homology"/>